<accession>P59554</accession>
<dbReference type="EC" id="6.1.1.3" evidence="1"/>
<dbReference type="EMBL" id="AE016826">
    <property type="protein sequence ID" value="AAO26853.1"/>
    <property type="molecule type" value="Genomic_DNA"/>
</dbReference>
<dbReference type="RefSeq" id="WP_011091254.1">
    <property type="nucleotide sequence ID" value="NC_004545.1"/>
</dbReference>
<dbReference type="SMR" id="P59554"/>
<dbReference type="STRING" id="224915.bbp_119"/>
<dbReference type="KEGG" id="bab:bbp_119"/>
<dbReference type="eggNOG" id="COG0441">
    <property type="taxonomic scope" value="Bacteria"/>
</dbReference>
<dbReference type="HOGENOM" id="CLU_008554_0_1_6"/>
<dbReference type="OrthoDB" id="9802304at2"/>
<dbReference type="Proteomes" id="UP000000601">
    <property type="component" value="Chromosome"/>
</dbReference>
<dbReference type="GO" id="GO:0005829">
    <property type="term" value="C:cytosol"/>
    <property type="evidence" value="ECO:0007669"/>
    <property type="project" value="TreeGrafter"/>
</dbReference>
<dbReference type="GO" id="GO:0005524">
    <property type="term" value="F:ATP binding"/>
    <property type="evidence" value="ECO:0007669"/>
    <property type="project" value="UniProtKB-UniRule"/>
</dbReference>
<dbReference type="GO" id="GO:0046872">
    <property type="term" value="F:metal ion binding"/>
    <property type="evidence" value="ECO:0007669"/>
    <property type="project" value="UniProtKB-KW"/>
</dbReference>
<dbReference type="GO" id="GO:0004829">
    <property type="term" value="F:threonine-tRNA ligase activity"/>
    <property type="evidence" value="ECO:0007669"/>
    <property type="project" value="UniProtKB-UniRule"/>
</dbReference>
<dbReference type="GO" id="GO:0000049">
    <property type="term" value="F:tRNA binding"/>
    <property type="evidence" value="ECO:0007669"/>
    <property type="project" value="UniProtKB-KW"/>
</dbReference>
<dbReference type="GO" id="GO:0006435">
    <property type="term" value="P:threonyl-tRNA aminoacylation"/>
    <property type="evidence" value="ECO:0007669"/>
    <property type="project" value="UniProtKB-UniRule"/>
</dbReference>
<dbReference type="CDD" id="cd01667">
    <property type="entry name" value="TGS_ThrRS"/>
    <property type="match status" value="1"/>
</dbReference>
<dbReference type="CDD" id="cd00860">
    <property type="entry name" value="ThrRS_anticodon"/>
    <property type="match status" value="1"/>
</dbReference>
<dbReference type="CDD" id="cd00771">
    <property type="entry name" value="ThrRS_core"/>
    <property type="match status" value="1"/>
</dbReference>
<dbReference type="FunFam" id="3.30.930.10:FF:000002">
    <property type="entry name" value="Threonine--tRNA ligase"/>
    <property type="match status" value="1"/>
</dbReference>
<dbReference type="FunFam" id="3.40.50.800:FF:000001">
    <property type="entry name" value="Threonine--tRNA ligase"/>
    <property type="match status" value="1"/>
</dbReference>
<dbReference type="Gene3D" id="3.10.20.30">
    <property type="match status" value="1"/>
</dbReference>
<dbReference type="Gene3D" id="3.30.54.20">
    <property type="match status" value="1"/>
</dbReference>
<dbReference type="Gene3D" id="3.40.50.800">
    <property type="entry name" value="Anticodon-binding domain"/>
    <property type="match status" value="1"/>
</dbReference>
<dbReference type="Gene3D" id="3.30.930.10">
    <property type="entry name" value="Bira Bifunctional Protein, Domain 2"/>
    <property type="match status" value="1"/>
</dbReference>
<dbReference type="Gene3D" id="3.30.980.10">
    <property type="entry name" value="Threonyl-trna Synthetase, Chain A, domain 2"/>
    <property type="match status" value="1"/>
</dbReference>
<dbReference type="HAMAP" id="MF_00184">
    <property type="entry name" value="Thr_tRNA_synth"/>
    <property type="match status" value="1"/>
</dbReference>
<dbReference type="InterPro" id="IPR002314">
    <property type="entry name" value="aa-tRNA-synt_IIb"/>
</dbReference>
<dbReference type="InterPro" id="IPR006195">
    <property type="entry name" value="aa-tRNA-synth_II"/>
</dbReference>
<dbReference type="InterPro" id="IPR045864">
    <property type="entry name" value="aa-tRNA-synth_II/BPL/LPL"/>
</dbReference>
<dbReference type="InterPro" id="IPR004154">
    <property type="entry name" value="Anticodon-bd"/>
</dbReference>
<dbReference type="InterPro" id="IPR036621">
    <property type="entry name" value="Anticodon-bd_dom_sf"/>
</dbReference>
<dbReference type="InterPro" id="IPR012675">
    <property type="entry name" value="Beta-grasp_dom_sf"/>
</dbReference>
<dbReference type="InterPro" id="IPR004095">
    <property type="entry name" value="TGS"/>
</dbReference>
<dbReference type="InterPro" id="IPR002320">
    <property type="entry name" value="Thr-tRNA-ligase_IIa"/>
</dbReference>
<dbReference type="InterPro" id="IPR018163">
    <property type="entry name" value="Thr/Ala-tRNA-synth_IIc_edit"/>
</dbReference>
<dbReference type="InterPro" id="IPR047246">
    <property type="entry name" value="ThrRS_anticodon"/>
</dbReference>
<dbReference type="InterPro" id="IPR033728">
    <property type="entry name" value="ThrRS_core"/>
</dbReference>
<dbReference type="InterPro" id="IPR012947">
    <property type="entry name" value="tRNA_SAD"/>
</dbReference>
<dbReference type="NCBIfam" id="TIGR00418">
    <property type="entry name" value="thrS"/>
    <property type="match status" value="1"/>
</dbReference>
<dbReference type="PANTHER" id="PTHR11451:SF44">
    <property type="entry name" value="THREONINE--TRNA LIGASE, CHLOROPLASTIC_MITOCHONDRIAL 2"/>
    <property type="match status" value="1"/>
</dbReference>
<dbReference type="PANTHER" id="PTHR11451">
    <property type="entry name" value="THREONINE-TRNA LIGASE"/>
    <property type="match status" value="1"/>
</dbReference>
<dbReference type="Pfam" id="PF03129">
    <property type="entry name" value="HGTP_anticodon"/>
    <property type="match status" value="1"/>
</dbReference>
<dbReference type="Pfam" id="PF00587">
    <property type="entry name" value="tRNA-synt_2b"/>
    <property type="match status" value="1"/>
</dbReference>
<dbReference type="Pfam" id="PF07973">
    <property type="entry name" value="tRNA_SAD"/>
    <property type="match status" value="1"/>
</dbReference>
<dbReference type="PRINTS" id="PR01047">
    <property type="entry name" value="TRNASYNTHTHR"/>
</dbReference>
<dbReference type="SMART" id="SM00863">
    <property type="entry name" value="tRNA_SAD"/>
    <property type="match status" value="1"/>
</dbReference>
<dbReference type="SUPFAM" id="SSF52954">
    <property type="entry name" value="Class II aaRS ABD-related"/>
    <property type="match status" value="1"/>
</dbReference>
<dbReference type="SUPFAM" id="SSF55681">
    <property type="entry name" value="Class II aaRS and biotin synthetases"/>
    <property type="match status" value="1"/>
</dbReference>
<dbReference type="SUPFAM" id="SSF55186">
    <property type="entry name" value="ThrRS/AlaRS common domain"/>
    <property type="match status" value="1"/>
</dbReference>
<dbReference type="PROSITE" id="PS50862">
    <property type="entry name" value="AA_TRNA_LIGASE_II"/>
    <property type="match status" value="1"/>
</dbReference>
<dbReference type="PROSITE" id="PS51880">
    <property type="entry name" value="TGS"/>
    <property type="match status" value="1"/>
</dbReference>
<evidence type="ECO:0000255" key="1">
    <source>
        <dbReference type="HAMAP-Rule" id="MF_00184"/>
    </source>
</evidence>
<evidence type="ECO:0000255" key="2">
    <source>
        <dbReference type="PROSITE-ProRule" id="PRU01228"/>
    </source>
</evidence>
<name>SYT_BUCBP</name>
<proteinExistence type="inferred from homology"/>
<gene>
    <name evidence="1" type="primary">thrS</name>
    <name type="ordered locus">bbp_119</name>
</gene>
<reference key="1">
    <citation type="journal article" date="2003" name="Proc. Natl. Acad. Sci. U.S.A.">
        <title>Reductive genome evolution in Buchnera aphidicola.</title>
        <authorList>
            <person name="van Ham R.C.H.J."/>
            <person name="Kamerbeek J."/>
            <person name="Palacios C."/>
            <person name="Rausell C."/>
            <person name="Abascal F."/>
            <person name="Bastolla U."/>
            <person name="Fernandez J.M."/>
            <person name="Jimenez L."/>
            <person name="Postigo M."/>
            <person name="Silva F.J."/>
            <person name="Tamames J."/>
            <person name="Viguera E."/>
            <person name="Latorre A."/>
            <person name="Valencia A."/>
            <person name="Moran F."/>
            <person name="Moya A."/>
        </authorList>
    </citation>
    <scope>NUCLEOTIDE SEQUENCE [LARGE SCALE GENOMIC DNA]</scope>
    <source>
        <strain>Bp</strain>
    </source>
</reference>
<organism>
    <name type="scientific">Buchnera aphidicola subsp. Baizongia pistaciae (strain Bp)</name>
    <dbReference type="NCBI Taxonomy" id="224915"/>
    <lineage>
        <taxon>Bacteria</taxon>
        <taxon>Pseudomonadati</taxon>
        <taxon>Pseudomonadota</taxon>
        <taxon>Gammaproteobacteria</taxon>
        <taxon>Enterobacterales</taxon>
        <taxon>Erwiniaceae</taxon>
        <taxon>Buchnera</taxon>
    </lineage>
</organism>
<comment type="function">
    <text evidence="1">Catalyzes the attachment of threonine to tRNA(Thr) in a two-step reaction: L-threonine is first activated by ATP to form Thr-AMP and then transferred to the acceptor end of tRNA(Thr). Also edits incorrectly charged L-seryl-tRNA(Thr).</text>
</comment>
<comment type="catalytic activity">
    <reaction evidence="1">
        <text>tRNA(Thr) + L-threonine + ATP = L-threonyl-tRNA(Thr) + AMP + diphosphate + H(+)</text>
        <dbReference type="Rhea" id="RHEA:24624"/>
        <dbReference type="Rhea" id="RHEA-COMP:9670"/>
        <dbReference type="Rhea" id="RHEA-COMP:9704"/>
        <dbReference type="ChEBI" id="CHEBI:15378"/>
        <dbReference type="ChEBI" id="CHEBI:30616"/>
        <dbReference type="ChEBI" id="CHEBI:33019"/>
        <dbReference type="ChEBI" id="CHEBI:57926"/>
        <dbReference type="ChEBI" id="CHEBI:78442"/>
        <dbReference type="ChEBI" id="CHEBI:78534"/>
        <dbReference type="ChEBI" id="CHEBI:456215"/>
        <dbReference type="EC" id="6.1.1.3"/>
    </reaction>
</comment>
<comment type="cofactor">
    <cofactor evidence="1">
        <name>Zn(2+)</name>
        <dbReference type="ChEBI" id="CHEBI:29105"/>
    </cofactor>
    <text evidence="1">Binds 1 zinc ion per subunit.</text>
</comment>
<comment type="subunit">
    <text evidence="1">Homodimer.</text>
</comment>
<comment type="subcellular location">
    <subcellularLocation>
        <location evidence="1">Cytoplasm</location>
    </subcellularLocation>
</comment>
<comment type="similarity">
    <text evidence="1">Belongs to the class-II aminoacyl-tRNA synthetase family.</text>
</comment>
<protein>
    <recommendedName>
        <fullName evidence="1">Threonine--tRNA ligase</fullName>
        <ecNumber evidence="1">6.1.1.3</ecNumber>
    </recommendedName>
    <alternativeName>
        <fullName evidence="1">Threonyl-tRNA synthetase</fullName>
        <shortName evidence="1">ThrRS</shortName>
    </alternativeName>
</protein>
<sequence length="643" mass="75323">MPTIKFIDGTCRVYPGSISVLDILKDVSPNSVQDFMFGCVNGISVDRNAIVTNDSIVKFVYKTDQSTLDIIRYSCICLLGKAVKKLWPSSKIGESDVLENGFFCDIEVDFSFNETSLHLLEACMRQMINKKYKIYTKTFSLKKASTIFKNRNETYKLFLLDRLVNFSNQVVSLCFHEEYIDIQKKISVPNIFLCRNFRLQKFSGVYWKGKRENKVLQRIYGTSWITRIQLEKHLDNVKKLDSRDHRKISKILDLYHIQEDLPGMIFWHRNGWIVFQELKKLIRVKLRKYNYQEVKTPVMMNKKIWKDSGHLDNYKESMFMVCSSNFEYGIKPMNCPGHVQIFNHVVRSYRDLPIRISEFGSCHRNEPSGALHGLMRIRNFTQDDAHIFCREDQICSEVSNCIRMVYEIYKIFGFKKILVRLSTRPKNRIGNDNIWDKAENDLATSLRESKIEFEYQHGEGAFYGPKIELSLFDSLGRVWQCATIQLDFCLPINLKAFYIDHNNERKVPIIVHRAVLGSIERFIGILIEEYIGNFPTWLAPIQVVLANVNSNHLQYIKLLYKEFYALGIRSEIDSRNETISYKIREHIARKIPYIIICGDKEVKNNTITLRTRSGKNFYCIDVQFFISKLCKEINSYSCSLMEE</sequence>
<feature type="chain" id="PRO_0000100952" description="Threonine--tRNA ligase">
    <location>
        <begin position="1"/>
        <end position="643"/>
    </location>
</feature>
<feature type="domain" description="TGS" evidence="2">
    <location>
        <begin position="1"/>
        <end position="61"/>
    </location>
</feature>
<feature type="region of interest" description="Catalytic" evidence="1">
    <location>
        <begin position="244"/>
        <end position="535"/>
    </location>
</feature>
<feature type="binding site" evidence="1">
    <location>
        <position position="335"/>
    </location>
    <ligand>
        <name>Zn(2+)</name>
        <dbReference type="ChEBI" id="CHEBI:29105"/>
    </ligand>
</feature>
<feature type="binding site" evidence="1">
    <location>
        <position position="386"/>
    </location>
    <ligand>
        <name>Zn(2+)</name>
        <dbReference type="ChEBI" id="CHEBI:29105"/>
    </ligand>
</feature>
<feature type="binding site" evidence="1">
    <location>
        <position position="512"/>
    </location>
    <ligand>
        <name>Zn(2+)</name>
        <dbReference type="ChEBI" id="CHEBI:29105"/>
    </ligand>
</feature>
<keyword id="KW-0030">Aminoacyl-tRNA synthetase</keyword>
<keyword id="KW-0067">ATP-binding</keyword>
<keyword id="KW-0963">Cytoplasm</keyword>
<keyword id="KW-0436">Ligase</keyword>
<keyword id="KW-0479">Metal-binding</keyword>
<keyword id="KW-0547">Nucleotide-binding</keyword>
<keyword id="KW-0648">Protein biosynthesis</keyword>
<keyword id="KW-1185">Reference proteome</keyword>
<keyword id="KW-0694">RNA-binding</keyword>
<keyword id="KW-0820">tRNA-binding</keyword>
<keyword id="KW-0862">Zinc</keyword>